<name>SYY_STRCO</name>
<feature type="chain" id="PRO_0000234800" description="Tyrosine--tRNA ligase">
    <location>
        <begin position="1"/>
        <end position="422"/>
    </location>
</feature>
<feature type="domain" description="S4 RNA-binding" evidence="1">
    <location>
        <begin position="353"/>
        <end position="419"/>
    </location>
</feature>
<feature type="short sequence motif" description="'HIGH' region">
    <location>
        <begin position="40"/>
        <end position="49"/>
    </location>
</feature>
<feature type="short sequence motif" description="'KMSKS' region">
    <location>
        <begin position="231"/>
        <end position="235"/>
    </location>
</feature>
<feature type="binding site" evidence="1">
    <location>
        <position position="35"/>
    </location>
    <ligand>
        <name>L-tyrosine</name>
        <dbReference type="ChEBI" id="CHEBI:58315"/>
    </ligand>
</feature>
<feature type="binding site" evidence="1">
    <location>
        <position position="170"/>
    </location>
    <ligand>
        <name>L-tyrosine</name>
        <dbReference type="ChEBI" id="CHEBI:58315"/>
    </ligand>
</feature>
<feature type="binding site" evidence="1">
    <location>
        <position position="174"/>
    </location>
    <ligand>
        <name>L-tyrosine</name>
        <dbReference type="ChEBI" id="CHEBI:58315"/>
    </ligand>
</feature>
<feature type="binding site" evidence="1">
    <location>
        <position position="234"/>
    </location>
    <ligand>
        <name>ATP</name>
        <dbReference type="ChEBI" id="CHEBI:30616"/>
    </ligand>
</feature>
<reference key="1">
    <citation type="journal article" date="2002" name="Nature">
        <title>Complete genome sequence of the model actinomycete Streptomyces coelicolor A3(2).</title>
        <authorList>
            <person name="Bentley S.D."/>
            <person name="Chater K.F."/>
            <person name="Cerdeno-Tarraga A.-M."/>
            <person name="Challis G.L."/>
            <person name="Thomson N.R."/>
            <person name="James K.D."/>
            <person name="Harris D.E."/>
            <person name="Quail M.A."/>
            <person name="Kieser H."/>
            <person name="Harper D."/>
            <person name="Bateman A."/>
            <person name="Brown S."/>
            <person name="Chandra G."/>
            <person name="Chen C.W."/>
            <person name="Collins M."/>
            <person name="Cronin A."/>
            <person name="Fraser A."/>
            <person name="Goble A."/>
            <person name="Hidalgo J."/>
            <person name="Hornsby T."/>
            <person name="Howarth S."/>
            <person name="Huang C.-H."/>
            <person name="Kieser T."/>
            <person name="Larke L."/>
            <person name="Murphy L.D."/>
            <person name="Oliver K."/>
            <person name="O'Neil S."/>
            <person name="Rabbinowitsch E."/>
            <person name="Rajandream M.A."/>
            <person name="Rutherford K.M."/>
            <person name="Rutter S."/>
            <person name="Seeger K."/>
            <person name="Saunders D."/>
            <person name="Sharp S."/>
            <person name="Squares R."/>
            <person name="Squares S."/>
            <person name="Taylor K."/>
            <person name="Warren T."/>
            <person name="Wietzorrek A."/>
            <person name="Woodward J.R."/>
            <person name="Barrell B.G."/>
            <person name="Parkhill J."/>
            <person name="Hopwood D.A."/>
        </authorList>
    </citation>
    <scope>NUCLEOTIDE SEQUENCE [LARGE SCALE GENOMIC DNA]</scope>
    <source>
        <strain>ATCC BAA-471 / A3(2) / M145</strain>
    </source>
</reference>
<organism>
    <name type="scientific">Streptomyces coelicolor (strain ATCC BAA-471 / A3(2) / M145)</name>
    <dbReference type="NCBI Taxonomy" id="100226"/>
    <lineage>
        <taxon>Bacteria</taxon>
        <taxon>Bacillati</taxon>
        <taxon>Actinomycetota</taxon>
        <taxon>Actinomycetes</taxon>
        <taxon>Kitasatosporales</taxon>
        <taxon>Streptomycetaceae</taxon>
        <taxon>Streptomyces</taxon>
        <taxon>Streptomyces albidoflavus group</taxon>
    </lineage>
</organism>
<keyword id="KW-0030">Aminoacyl-tRNA synthetase</keyword>
<keyword id="KW-0067">ATP-binding</keyword>
<keyword id="KW-0963">Cytoplasm</keyword>
<keyword id="KW-0436">Ligase</keyword>
<keyword id="KW-0547">Nucleotide-binding</keyword>
<keyword id="KW-0648">Protein biosynthesis</keyword>
<keyword id="KW-1185">Reference proteome</keyword>
<keyword id="KW-0694">RNA-binding</keyword>
<comment type="function">
    <text evidence="1">Catalyzes the attachment of tyrosine to tRNA(Tyr) in a two-step reaction: tyrosine is first activated by ATP to form Tyr-AMP and then transferred to the acceptor end of tRNA(Tyr).</text>
</comment>
<comment type="catalytic activity">
    <reaction evidence="1">
        <text>tRNA(Tyr) + L-tyrosine + ATP = L-tyrosyl-tRNA(Tyr) + AMP + diphosphate + H(+)</text>
        <dbReference type="Rhea" id="RHEA:10220"/>
        <dbReference type="Rhea" id="RHEA-COMP:9706"/>
        <dbReference type="Rhea" id="RHEA-COMP:9707"/>
        <dbReference type="ChEBI" id="CHEBI:15378"/>
        <dbReference type="ChEBI" id="CHEBI:30616"/>
        <dbReference type="ChEBI" id="CHEBI:33019"/>
        <dbReference type="ChEBI" id="CHEBI:58315"/>
        <dbReference type="ChEBI" id="CHEBI:78442"/>
        <dbReference type="ChEBI" id="CHEBI:78536"/>
        <dbReference type="ChEBI" id="CHEBI:456215"/>
        <dbReference type="EC" id="6.1.1.1"/>
    </reaction>
</comment>
<comment type="subunit">
    <text evidence="1">Homodimer.</text>
</comment>
<comment type="subcellular location">
    <subcellularLocation>
        <location evidence="1">Cytoplasm</location>
    </subcellularLocation>
</comment>
<comment type="similarity">
    <text evidence="1">Belongs to the class-I aminoacyl-tRNA synthetase family. TyrS type 1 subfamily.</text>
</comment>
<gene>
    <name evidence="1" type="primary">tyrS</name>
    <name type="ordered locus">SCO1818</name>
    <name type="ORF">SCI8.03</name>
</gene>
<evidence type="ECO:0000255" key="1">
    <source>
        <dbReference type="HAMAP-Rule" id="MF_02006"/>
    </source>
</evidence>
<proteinExistence type="inferred from homology"/>
<sequence length="422" mass="46324">MTDIVDELKWRGLFAQSTDEDALRKALADGPVTFYCGFDPTAPSLHVGHLVQVLTVRRLQQAGHRPLALVGGATGQIGDPRPTAERTLNSPETVAGWVERLRGQIEPFLSFEGENAAVMVNNLDWTEGLSAIEFLRDIGKHFRVNKMLTKDSVARRLESSEGISYTEFSYQLLQAMDFLQLYRRYGCTMQQGGSDQWGNLTAGLDLLHRLEPDASVHAYATPLMTKADGTKFGKTEGGAVWLDPEMTTPYAFYQFWLNVDDRDISTYMRILSFRSRAELEELERQTEERPQARAAQRALAEELTTLVHGAGQTAAVIAASKALFGQGELAELDEATLAAALSELPHVRVAEPAPVVDLFAEVGLVASKSAARRTVKEGGAYVNNAKVTGEDAVPAKEDLLHGRWLVLRRGKKNLAAVEITGA</sequence>
<dbReference type="EC" id="6.1.1.1" evidence="1"/>
<dbReference type="EMBL" id="AL939110">
    <property type="protein sequence ID" value="CAB59434.1"/>
    <property type="molecule type" value="Genomic_DNA"/>
</dbReference>
<dbReference type="RefSeq" id="NP_626086.1">
    <property type="nucleotide sequence ID" value="NC_003888.3"/>
</dbReference>
<dbReference type="RefSeq" id="WP_011027993.1">
    <property type="nucleotide sequence ID" value="NZ_VNID01000001.1"/>
</dbReference>
<dbReference type="SMR" id="Q9RJ50"/>
<dbReference type="FunCoup" id="Q9RJ50">
    <property type="interactions" value="480"/>
</dbReference>
<dbReference type="STRING" id="100226.gene:17759415"/>
<dbReference type="PaxDb" id="100226-SCO1818"/>
<dbReference type="GeneID" id="91387205"/>
<dbReference type="KEGG" id="sco:SCO1818"/>
<dbReference type="PATRIC" id="fig|100226.15.peg.1839"/>
<dbReference type="eggNOG" id="COG0162">
    <property type="taxonomic scope" value="Bacteria"/>
</dbReference>
<dbReference type="HOGENOM" id="CLU_024003_0_3_11"/>
<dbReference type="InParanoid" id="Q9RJ50"/>
<dbReference type="OrthoDB" id="9804243at2"/>
<dbReference type="PhylomeDB" id="Q9RJ50"/>
<dbReference type="Proteomes" id="UP000001973">
    <property type="component" value="Chromosome"/>
</dbReference>
<dbReference type="GO" id="GO:0005829">
    <property type="term" value="C:cytosol"/>
    <property type="evidence" value="ECO:0000318"/>
    <property type="project" value="GO_Central"/>
</dbReference>
<dbReference type="GO" id="GO:0005524">
    <property type="term" value="F:ATP binding"/>
    <property type="evidence" value="ECO:0007669"/>
    <property type="project" value="UniProtKB-UniRule"/>
</dbReference>
<dbReference type="GO" id="GO:0003723">
    <property type="term" value="F:RNA binding"/>
    <property type="evidence" value="ECO:0007669"/>
    <property type="project" value="UniProtKB-KW"/>
</dbReference>
<dbReference type="GO" id="GO:0004831">
    <property type="term" value="F:tyrosine-tRNA ligase activity"/>
    <property type="evidence" value="ECO:0000318"/>
    <property type="project" value="GO_Central"/>
</dbReference>
<dbReference type="GO" id="GO:0043039">
    <property type="term" value="P:tRNA aminoacylation"/>
    <property type="evidence" value="ECO:0000318"/>
    <property type="project" value="GO_Central"/>
</dbReference>
<dbReference type="GO" id="GO:0006437">
    <property type="term" value="P:tyrosyl-tRNA aminoacylation"/>
    <property type="evidence" value="ECO:0007669"/>
    <property type="project" value="UniProtKB-UniRule"/>
</dbReference>
<dbReference type="CDD" id="cd00165">
    <property type="entry name" value="S4"/>
    <property type="match status" value="1"/>
</dbReference>
<dbReference type="CDD" id="cd00805">
    <property type="entry name" value="TyrRS_core"/>
    <property type="match status" value="1"/>
</dbReference>
<dbReference type="FunFam" id="1.10.240.10:FF:000001">
    <property type="entry name" value="Tyrosine--tRNA ligase"/>
    <property type="match status" value="1"/>
</dbReference>
<dbReference type="FunFam" id="3.10.290.10:FF:000014">
    <property type="entry name" value="Tyrosine--tRNA ligase"/>
    <property type="match status" value="1"/>
</dbReference>
<dbReference type="FunFam" id="3.40.50.620:FF:000008">
    <property type="entry name" value="Tyrosine--tRNA ligase"/>
    <property type="match status" value="1"/>
</dbReference>
<dbReference type="Gene3D" id="3.40.50.620">
    <property type="entry name" value="HUPs"/>
    <property type="match status" value="1"/>
</dbReference>
<dbReference type="Gene3D" id="3.10.290.10">
    <property type="entry name" value="RNA-binding S4 domain"/>
    <property type="match status" value="1"/>
</dbReference>
<dbReference type="Gene3D" id="1.10.240.10">
    <property type="entry name" value="Tyrosyl-Transfer RNA Synthetase"/>
    <property type="match status" value="1"/>
</dbReference>
<dbReference type="HAMAP" id="MF_02006">
    <property type="entry name" value="Tyr_tRNA_synth_type1"/>
    <property type="match status" value="1"/>
</dbReference>
<dbReference type="InterPro" id="IPR001412">
    <property type="entry name" value="aa-tRNA-synth_I_CS"/>
</dbReference>
<dbReference type="InterPro" id="IPR002305">
    <property type="entry name" value="aa-tRNA-synth_Ic"/>
</dbReference>
<dbReference type="InterPro" id="IPR014729">
    <property type="entry name" value="Rossmann-like_a/b/a_fold"/>
</dbReference>
<dbReference type="InterPro" id="IPR036986">
    <property type="entry name" value="S4_RNA-bd_sf"/>
</dbReference>
<dbReference type="InterPro" id="IPR054608">
    <property type="entry name" value="SYY-like_C"/>
</dbReference>
<dbReference type="InterPro" id="IPR002307">
    <property type="entry name" value="Tyr-tRNA-ligase"/>
</dbReference>
<dbReference type="InterPro" id="IPR024088">
    <property type="entry name" value="Tyr-tRNA-ligase_bac-type"/>
</dbReference>
<dbReference type="InterPro" id="IPR024107">
    <property type="entry name" value="Tyr-tRNA-ligase_bac_1"/>
</dbReference>
<dbReference type="NCBIfam" id="TIGR00234">
    <property type="entry name" value="tyrS"/>
    <property type="match status" value="1"/>
</dbReference>
<dbReference type="PANTHER" id="PTHR11766:SF0">
    <property type="entry name" value="TYROSINE--TRNA LIGASE, MITOCHONDRIAL"/>
    <property type="match status" value="1"/>
</dbReference>
<dbReference type="PANTHER" id="PTHR11766">
    <property type="entry name" value="TYROSYL-TRNA SYNTHETASE"/>
    <property type="match status" value="1"/>
</dbReference>
<dbReference type="Pfam" id="PF22421">
    <property type="entry name" value="SYY_C-terminal"/>
    <property type="match status" value="1"/>
</dbReference>
<dbReference type="Pfam" id="PF00579">
    <property type="entry name" value="tRNA-synt_1b"/>
    <property type="match status" value="1"/>
</dbReference>
<dbReference type="PRINTS" id="PR01040">
    <property type="entry name" value="TRNASYNTHTYR"/>
</dbReference>
<dbReference type="SUPFAM" id="SSF55174">
    <property type="entry name" value="Alpha-L RNA-binding motif"/>
    <property type="match status" value="1"/>
</dbReference>
<dbReference type="SUPFAM" id="SSF52374">
    <property type="entry name" value="Nucleotidylyl transferase"/>
    <property type="match status" value="1"/>
</dbReference>
<dbReference type="PROSITE" id="PS00178">
    <property type="entry name" value="AA_TRNA_LIGASE_I"/>
    <property type="match status" value="1"/>
</dbReference>
<dbReference type="PROSITE" id="PS50889">
    <property type="entry name" value="S4"/>
    <property type="match status" value="1"/>
</dbReference>
<protein>
    <recommendedName>
        <fullName evidence="1">Tyrosine--tRNA ligase</fullName>
        <ecNumber evidence="1">6.1.1.1</ecNumber>
    </recommendedName>
    <alternativeName>
        <fullName evidence="1">Tyrosyl-tRNA synthetase</fullName>
        <shortName evidence="1">TyrRS</shortName>
    </alternativeName>
</protein>
<accession>Q9RJ50</accession>